<proteinExistence type="inferred from homology"/>
<protein>
    <recommendedName>
        <fullName evidence="1">Probable nicotinate-nucleotide adenylyltransferase</fullName>
        <ecNumber evidence="1">2.7.7.18</ecNumber>
    </recommendedName>
    <alternativeName>
        <fullName evidence="1">Deamido-NAD(+) diphosphorylase</fullName>
    </alternativeName>
    <alternativeName>
        <fullName evidence="1">Deamido-NAD(+) pyrophosphorylase</fullName>
    </alternativeName>
    <alternativeName>
        <fullName evidence="1">Nicotinate mononucleotide adenylyltransferase</fullName>
        <shortName evidence="1">NaMN adenylyltransferase</shortName>
    </alternativeName>
</protein>
<feature type="chain" id="PRO_0000336741" description="Probable nicotinate-nucleotide adenylyltransferase">
    <location>
        <begin position="1"/>
        <end position="188"/>
    </location>
</feature>
<accession>A6QCD6</accession>
<keyword id="KW-0067">ATP-binding</keyword>
<keyword id="KW-0520">NAD</keyword>
<keyword id="KW-0547">Nucleotide-binding</keyword>
<keyword id="KW-0548">Nucleotidyltransferase</keyword>
<keyword id="KW-0662">Pyridine nucleotide biosynthesis</keyword>
<keyword id="KW-0808">Transferase</keyword>
<gene>
    <name evidence="1" type="primary">nadD</name>
    <name type="ordered locus">SUN_2205</name>
</gene>
<sequence>MVNQSKPEVAIFGGSFDPPHKGHQQIVRKAVQILDIDKLIVLPAYLNPFKNVSLANPEKRLEWCYQLFDGIPKVVVDDYEIRQNKSVRTSQSVKHFNNTYSVKYLIIGSDNLSTLTKWHEFKWLNDHITWVIVTRKGHPVQTEGLKSWRILEIDFPISSTTIREKKDLRYIDNKIKQSVEKTIKDKKE</sequence>
<comment type="function">
    <text evidence="1">Catalyzes the reversible adenylation of nicotinate mononucleotide (NaMN) to nicotinic acid adenine dinucleotide (NaAD).</text>
</comment>
<comment type="catalytic activity">
    <reaction evidence="1">
        <text>nicotinate beta-D-ribonucleotide + ATP + H(+) = deamido-NAD(+) + diphosphate</text>
        <dbReference type="Rhea" id="RHEA:22860"/>
        <dbReference type="ChEBI" id="CHEBI:15378"/>
        <dbReference type="ChEBI" id="CHEBI:30616"/>
        <dbReference type="ChEBI" id="CHEBI:33019"/>
        <dbReference type="ChEBI" id="CHEBI:57502"/>
        <dbReference type="ChEBI" id="CHEBI:58437"/>
        <dbReference type="EC" id="2.7.7.18"/>
    </reaction>
</comment>
<comment type="pathway">
    <text evidence="1">Cofactor biosynthesis; NAD(+) biosynthesis; deamido-NAD(+) from nicotinate D-ribonucleotide: step 1/1.</text>
</comment>
<comment type="similarity">
    <text evidence="1">Belongs to the NadD family.</text>
</comment>
<name>NADD_SULNB</name>
<evidence type="ECO:0000255" key="1">
    <source>
        <dbReference type="HAMAP-Rule" id="MF_00244"/>
    </source>
</evidence>
<organism>
    <name type="scientific">Sulfurovum sp. (strain NBC37-1)</name>
    <dbReference type="NCBI Taxonomy" id="387093"/>
    <lineage>
        <taxon>Bacteria</taxon>
        <taxon>Pseudomonadati</taxon>
        <taxon>Campylobacterota</taxon>
        <taxon>Epsilonproteobacteria</taxon>
        <taxon>Campylobacterales</taxon>
        <taxon>Sulfurovaceae</taxon>
        <taxon>Sulfurovum</taxon>
    </lineage>
</organism>
<reference key="1">
    <citation type="journal article" date="2007" name="Proc. Natl. Acad. Sci. U.S.A.">
        <title>Deep-sea vent epsilon-proteobacterial genomes provide insights into emergence of pathogens.</title>
        <authorList>
            <person name="Nakagawa S."/>
            <person name="Takaki Y."/>
            <person name="Shimamura S."/>
            <person name="Reysenbach A.-L."/>
            <person name="Takai K."/>
            <person name="Horikoshi K."/>
        </authorList>
    </citation>
    <scope>NUCLEOTIDE SEQUENCE [LARGE SCALE GENOMIC DNA]</scope>
    <source>
        <strain>NBC37-1</strain>
    </source>
</reference>
<dbReference type="EC" id="2.7.7.18" evidence="1"/>
<dbReference type="EMBL" id="AP009179">
    <property type="protein sequence ID" value="BAF73145.1"/>
    <property type="molecule type" value="Genomic_DNA"/>
</dbReference>
<dbReference type="RefSeq" id="WP_012083978.1">
    <property type="nucleotide sequence ID" value="NC_009663.1"/>
</dbReference>
<dbReference type="SMR" id="A6QCD6"/>
<dbReference type="STRING" id="387093.SUN_2205"/>
<dbReference type="KEGG" id="sun:SUN_2205"/>
<dbReference type="eggNOG" id="COG1057">
    <property type="taxonomic scope" value="Bacteria"/>
</dbReference>
<dbReference type="HOGENOM" id="CLU_069765_3_2_7"/>
<dbReference type="OrthoDB" id="5295945at2"/>
<dbReference type="UniPathway" id="UPA00253">
    <property type="reaction ID" value="UER00332"/>
</dbReference>
<dbReference type="Proteomes" id="UP000006378">
    <property type="component" value="Chromosome"/>
</dbReference>
<dbReference type="GO" id="GO:0005524">
    <property type="term" value="F:ATP binding"/>
    <property type="evidence" value="ECO:0007669"/>
    <property type="project" value="UniProtKB-KW"/>
</dbReference>
<dbReference type="GO" id="GO:0004515">
    <property type="term" value="F:nicotinate-nucleotide adenylyltransferase activity"/>
    <property type="evidence" value="ECO:0007669"/>
    <property type="project" value="UniProtKB-UniRule"/>
</dbReference>
<dbReference type="GO" id="GO:0009435">
    <property type="term" value="P:NAD biosynthetic process"/>
    <property type="evidence" value="ECO:0007669"/>
    <property type="project" value="UniProtKB-UniRule"/>
</dbReference>
<dbReference type="CDD" id="cd02165">
    <property type="entry name" value="NMNAT"/>
    <property type="match status" value="1"/>
</dbReference>
<dbReference type="Gene3D" id="3.40.50.620">
    <property type="entry name" value="HUPs"/>
    <property type="match status" value="1"/>
</dbReference>
<dbReference type="HAMAP" id="MF_00244">
    <property type="entry name" value="NaMN_adenylyltr"/>
    <property type="match status" value="1"/>
</dbReference>
<dbReference type="InterPro" id="IPR004821">
    <property type="entry name" value="Cyt_trans-like"/>
</dbReference>
<dbReference type="InterPro" id="IPR005248">
    <property type="entry name" value="NadD/NMNAT"/>
</dbReference>
<dbReference type="InterPro" id="IPR014729">
    <property type="entry name" value="Rossmann-like_a/b/a_fold"/>
</dbReference>
<dbReference type="NCBIfam" id="TIGR00125">
    <property type="entry name" value="cyt_tran_rel"/>
    <property type="match status" value="1"/>
</dbReference>
<dbReference type="NCBIfam" id="TIGR00482">
    <property type="entry name" value="nicotinate (nicotinamide) nucleotide adenylyltransferase"/>
    <property type="match status" value="1"/>
</dbReference>
<dbReference type="PANTHER" id="PTHR39321">
    <property type="entry name" value="NICOTINATE-NUCLEOTIDE ADENYLYLTRANSFERASE-RELATED"/>
    <property type="match status" value="1"/>
</dbReference>
<dbReference type="PANTHER" id="PTHR39321:SF3">
    <property type="entry name" value="PHOSPHOPANTETHEINE ADENYLYLTRANSFERASE"/>
    <property type="match status" value="1"/>
</dbReference>
<dbReference type="Pfam" id="PF01467">
    <property type="entry name" value="CTP_transf_like"/>
    <property type="match status" value="1"/>
</dbReference>
<dbReference type="SUPFAM" id="SSF52374">
    <property type="entry name" value="Nucleotidylyl transferase"/>
    <property type="match status" value="1"/>
</dbReference>